<comment type="function">
    <text evidence="1">Catalyzes the attachment of alanine to tRNA(Ala) in a two-step reaction: alanine is first activated by ATP to form Ala-AMP and then transferred to the acceptor end of tRNA(Ala). Also edits incorrectly charged Ser-tRNA(Ala) and Gly-tRNA(Ala) via its editing domain.</text>
</comment>
<comment type="catalytic activity">
    <reaction evidence="1">
        <text>tRNA(Ala) + L-alanine + ATP = L-alanyl-tRNA(Ala) + AMP + diphosphate</text>
        <dbReference type="Rhea" id="RHEA:12540"/>
        <dbReference type="Rhea" id="RHEA-COMP:9657"/>
        <dbReference type="Rhea" id="RHEA-COMP:9923"/>
        <dbReference type="ChEBI" id="CHEBI:30616"/>
        <dbReference type="ChEBI" id="CHEBI:33019"/>
        <dbReference type="ChEBI" id="CHEBI:57972"/>
        <dbReference type="ChEBI" id="CHEBI:78442"/>
        <dbReference type="ChEBI" id="CHEBI:78497"/>
        <dbReference type="ChEBI" id="CHEBI:456215"/>
        <dbReference type="EC" id="6.1.1.7"/>
    </reaction>
</comment>
<comment type="cofactor">
    <cofactor evidence="1">
        <name>Zn(2+)</name>
        <dbReference type="ChEBI" id="CHEBI:29105"/>
    </cofactor>
    <text evidence="1">Binds 1 zinc ion per subunit.</text>
</comment>
<comment type="subcellular location">
    <subcellularLocation>
        <location evidence="1">Cytoplasm</location>
    </subcellularLocation>
</comment>
<comment type="domain">
    <text evidence="1">Consists of three domains; the N-terminal catalytic domain, the editing domain and the C-terminal C-Ala domain. The editing domain removes incorrectly charged amino acids, while the C-Ala domain, along with tRNA(Ala), serves as a bridge to cooperatively bring together the editing and aminoacylation centers thus stimulating deacylation of misacylated tRNAs.</text>
</comment>
<comment type="similarity">
    <text evidence="1">Belongs to the class-II aminoacyl-tRNA synthetase family.</text>
</comment>
<feature type="chain" id="PRO_0000075105" description="Alanine--tRNA ligase">
    <location>
        <begin position="1"/>
        <end position="890"/>
    </location>
</feature>
<feature type="binding site" evidence="1">
    <location>
        <position position="578"/>
    </location>
    <ligand>
        <name>Zn(2+)</name>
        <dbReference type="ChEBI" id="CHEBI:29105"/>
    </ligand>
</feature>
<feature type="binding site" evidence="1">
    <location>
        <position position="582"/>
    </location>
    <ligand>
        <name>Zn(2+)</name>
        <dbReference type="ChEBI" id="CHEBI:29105"/>
    </ligand>
</feature>
<feature type="binding site" evidence="1">
    <location>
        <position position="689"/>
    </location>
    <ligand>
        <name>Zn(2+)</name>
        <dbReference type="ChEBI" id="CHEBI:29105"/>
    </ligand>
</feature>
<feature type="binding site" evidence="1">
    <location>
        <position position="693"/>
    </location>
    <ligand>
        <name>Zn(2+)</name>
        <dbReference type="ChEBI" id="CHEBI:29105"/>
    </ligand>
</feature>
<organism>
    <name type="scientific">Deinococcus radiodurans (strain ATCC 13939 / DSM 20539 / JCM 16871 / CCUG 27074 / LMG 4051 / NBRC 15346 / NCIMB 9279 / VKM B-1422 / R1)</name>
    <dbReference type="NCBI Taxonomy" id="243230"/>
    <lineage>
        <taxon>Bacteria</taxon>
        <taxon>Thermotogati</taxon>
        <taxon>Deinococcota</taxon>
        <taxon>Deinococci</taxon>
        <taxon>Deinococcales</taxon>
        <taxon>Deinococcaceae</taxon>
        <taxon>Deinococcus</taxon>
    </lineage>
</organism>
<gene>
    <name evidence="1" type="primary">alaS</name>
    <name type="ordered locus">DR_2300</name>
</gene>
<evidence type="ECO:0000255" key="1">
    <source>
        <dbReference type="HAMAP-Rule" id="MF_00036"/>
    </source>
</evidence>
<sequence>MTAPLTTAEIRERYLYFFETKGHLRLPSHSTIAPDPTTLFTVAGMQPFKENFMGAPAVFDGQPSKRVTTAQKCVRVGDIENVGRTRRHLSLFEMMGNFSFGDYFKRDAIHWAWEFLTGPEWMGMDKDKMYVTVYKDDDEAFGYWTQDIGLPAEHIHRFDADENFWPANAPLEGPNGPCGPCSEIYYDRGENYGDDTWGDYYQTRESARFLEVWNLVFPQYDRQDLDASGQPVLKDLPFKNIDTGMGLERVASVVQDVPDFYSNDVFKPIVERVAELSGKPYEGETSVSHRVVAEHIRSVSMIVADGTAFSNTGRGYTARKIMRRAIRHGYMLGLREPQLYRLVELVVDSMGGAYPELQHNQSRVEASVRAEEEQFLKTLEGGIKRLGGLLSGMEKGSTLVGKDAFELYDTYGFPVDLTKEIAEEYGVSVDEAGYAESLEHAQEIARAGSKYGKSELFGGHQEALDGLPATQFVGYDQTSGDGQVLALLSGGERLSHLPAGSEATVVLSQTPFYGEGGGEVGDTGRLEWDGGAGIVRDTQKTKQGVFLHDVLVEQGELKEGTRVRGVVSPERAAIQRHHTATHLLHAALRAVLGGGVQQKGSRVAADQLRFDFSHGAAMSAEEIAQVETLVSRWVSANFPVSWREMPIAEAKAAGATALFGEKYGDVVRVVRVEGDVDFGGHAVSSMELCGGAHVSRTGDIGAFVIVSDENVAAGVRRIEALAGEQATAWLRGRLNASAKAAALLNTSPEGLEERVSGLQGQLKAAEKETAQARRQLAEAQMGGGGSAAQTRELGGFKVASLKLSGIEGNELRGAADKLLDQSGADLVVIASDKGLVVKATKDAVAKGAHAGQLVSKLAAAGGGKGGGRPDMAQAGITDAAGALGALDTAF</sequence>
<keyword id="KW-0030">Aminoacyl-tRNA synthetase</keyword>
<keyword id="KW-0067">ATP-binding</keyword>
<keyword id="KW-0963">Cytoplasm</keyword>
<keyword id="KW-0436">Ligase</keyword>
<keyword id="KW-0479">Metal-binding</keyword>
<keyword id="KW-0547">Nucleotide-binding</keyword>
<keyword id="KW-0648">Protein biosynthesis</keyword>
<keyword id="KW-1185">Reference proteome</keyword>
<keyword id="KW-0694">RNA-binding</keyword>
<keyword id="KW-0820">tRNA-binding</keyword>
<keyword id="KW-0862">Zinc</keyword>
<dbReference type="EC" id="6.1.1.7" evidence="1"/>
<dbReference type="EMBL" id="AE000513">
    <property type="protein sequence ID" value="AAF11848.1"/>
    <property type="molecule type" value="Genomic_DNA"/>
</dbReference>
<dbReference type="PIR" id="F75289">
    <property type="entry name" value="F75289"/>
</dbReference>
<dbReference type="RefSeq" id="NP_296021.1">
    <property type="nucleotide sequence ID" value="NC_001263.1"/>
</dbReference>
<dbReference type="RefSeq" id="WP_010888928.1">
    <property type="nucleotide sequence ID" value="NC_001263.1"/>
</dbReference>
<dbReference type="SMR" id="Q9RS27"/>
<dbReference type="FunCoup" id="Q9RS27">
    <property type="interactions" value="489"/>
</dbReference>
<dbReference type="STRING" id="243230.DR_2300"/>
<dbReference type="PaxDb" id="243230-DR_2300"/>
<dbReference type="EnsemblBacteria" id="AAF11848">
    <property type="protein sequence ID" value="AAF11848"/>
    <property type="gene ID" value="DR_2300"/>
</dbReference>
<dbReference type="GeneID" id="69518552"/>
<dbReference type="KEGG" id="dra:DR_2300"/>
<dbReference type="PATRIC" id="fig|243230.17.peg.2529"/>
<dbReference type="eggNOG" id="COG0013">
    <property type="taxonomic scope" value="Bacteria"/>
</dbReference>
<dbReference type="HOGENOM" id="CLU_004485_1_1_0"/>
<dbReference type="InParanoid" id="Q9RS27"/>
<dbReference type="OrthoDB" id="9803884at2"/>
<dbReference type="Proteomes" id="UP000002524">
    <property type="component" value="Chromosome 1"/>
</dbReference>
<dbReference type="GO" id="GO:0005829">
    <property type="term" value="C:cytosol"/>
    <property type="evidence" value="ECO:0000318"/>
    <property type="project" value="GO_Central"/>
</dbReference>
<dbReference type="GO" id="GO:0004813">
    <property type="term" value="F:alanine-tRNA ligase activity"/>
    <property type="evidence" value="ECO:0000318"/>
    <property type="project" value="GO_Central"/>
</dbReference>
<dbReference type="GO" id="GO:0002161">
    <property type="term" value="F:aminoacyl-tRNA deacylase activity"/>
    <property type="evidence" value="ECO:0000318"/>
    <property type="project" value="GO_Central"/>
</dbReference>
<dbReference type="GO" id="GO:0005524">
    <property type="term" value="F:ATP binding"/>
    <property type="evidence" value="ECO:0007669"/>
    <property type="project" value="UniProtKB-UniRule"/>
</dbReference>
<dbReference type="GO" id="GO:0000049">
    <property type="term" value="F:tRNA binding"/>
    <property type="evidence" value="ECO:0007669"/>
    <property type="project" value="UniProtKB-KW"/>
</dbReference>
<dbReference type="GO" id="GO:0008270">
    <property type="term" value="F:zinc ion binding"/>
    <property type="evidence" value="ECO:0007669"/>
    <property type="project" value="UniProtKB-UniRule"/>
</dbReference>
<dbReference type="GO" id="GO:0006419">
    <property type="term" value="P:alanyl-tRNA aminoacylation"/>
    <property type="evidence" value="ECO:0000318"/>
    <property type="project" value="GO_Central"/>
</dbReference>
<dbReference type="CDD" id="cd00673">
    <property type="entry name" value="AlaRS_core"/>
    <property type="match status" value="1"/>
</dbReference>
<dbReference type="FunFam" id="2.40.30.130:FF:000001">
    <property type="entry name" value="Alanine--tRNA ligase"/>
    <property type="match status" value="1"/>
</dbReference>
<dbReference type="FunFam" id="3.10.310.40:FF:000001">
    <property type="entry name" value="Alanine--tRNA ligase"/>
    <property type="match status" value="1"/>
</dbReference>
<dbReference type="FunFam" id="3.30.54.20:FF:000001">
    <property type="entry name" value="Alanine--tRNA ligase"/>
    <property type="match status" value="1"/>
</dbReference>
<dbReference type="FunFam" id="3.30.980.10:FF:000004">
    <property type="entry name" value="Alanine--tRNA ligase, cytoplasmic"/>
    <property type="match status" value="1"/>
</dbReference>
<dbReference type="Gene3D" id="2.40.30.130">
    <property type="match status" value="1"/>
</dbReference>
<dbReference type="Gene3D" id="3.10.310.40">
    <property type="match status" value="1"/>
</dbReference>
<dbReference type="Gene3D" id="3.30.54.20">
    <property type="match status" value="1"/>
</dbReference>
<dbReference type="Gene3D" id="6.10.250.550">
    <property type="match status" value="1"/>
</dbReference>
<dbReference type="Gene3D" id="3.30.930.10">
    <property type="entry name" value="Bira Bifunctional Protein, Domain 2"/>
    <property type="match status" value="1"/>
</dbReference>
<dbReference type="Gene3D" id="3.30.980.10">
    <property type="entry name" value="Threonyl-trna Synthetase, Chain A, domain 2"/>
    <property type="match status" value="1"/>
</dbReference>
<dbReference type="HAMAP" id="MF_00036_B">
    <property type="entry name" value="Ala_tRNA_synth_B"/>
    <property type="match status" value="1"/>
</dbReference>
<dbReference type="InterPro" id="IPR045864">
    <property type="entry name" value="aa-tRNA-synth_II/BPL/LPL"/>
</dbReference>
<dbReference type="InterPro" id="IPR002318">
    <property type="entry name" value="Ala-tRNA-lgiase_IIc"/>
</dbReference>
<dbReference type="InterPro" id="IPR018162">
    <property type="entry name" value="Ala-tRNA-ligase_IIc_anticod-bd"/>
</dbReference>
<dbReference type="InterPro" id="IPR018165">
    <property type="entry name" value="Ala-tRNA-synth_IIc_core"/>
</dbReference>
<dbReference type="InterPro" id="IPR018164">
    <property type="entry name" value="Ala-tRNA-synth_IIc_N"/>
</dbReference>
<dbReference type="InterPro" id="IPR050058">
    <property type="entry name" value="Ala-tRNA_ligase"/>
</dbReference>
<dbReference type="InterPro" id="IPR023033">
    <property type="entry name" value="Ala_tRNA_ligase_euk/bac"/>
</dbReference>
<dbReference type="InterPro" id="IPR003156">
    <property type="entry name" value="DHHA1_dom"/>
</dbReference>
<dbReference type="InterPro" id="IPR018163">
    <property type="entry name" value="Thr/Ala-tRNA-synth_IIc_edit"/>
</dbReference>
<dbReference type="InterPro" id="IPR009000">
    <property type="entry name" value="Transl_B-barrel_sf"/>
</dbReference>
<dbReference type="InterPro" id="IPR012947">
    <property type="entry name" value="tRNA_SAD"/>
</dbReference>
<dbReference type="NCBIfam" id="TIGR00344">
    <property type="entry name" value="alaS"/>
    <property type="match status" value="1"/>
</dbReference>
<dbReference type="PANTHER" id="PTHR11777:SF9">
    <property type="entry name" value="ALANINE--TRNA LIGASE, CYTOPLASMIC"/>
    <property type="match status" value="1"/>
</dbReference>
<dbReference type="PANTHER" id="PTHR11777">
    <property type="entry name" value="ALANYL-TRNA SYNTHETASE"/>
    <property type="match status" value="1"/>
</dbReference>
<dbReference type="Pfam" id="PF02272">
    <property type="entry name" value="DHHA1"/>
    <property type="match status" value="1"/>
</dbReference>
<dbReference type="Pfam" id="PF01411">
    <property type="entry name" value="tRNA-synt_2c"/>
    <property type="match status" value="1"/>
</dbReference>
<dbReference type="Pfam" id="PF07973">
    <property type="entry name" value="tRNA_SAD"/>
    <property type="match status" value="1"/>
</dbReference>
<dbReference type="PRINTS" id="PR00980">
    <property type="entry name" value="TRNASYNTHALA"/>
</dbReference>
<dbReference type="SMART" id="SM00863">
    <property type="entry name" value="tRNA_SAD"/>
    <property type="match status" value="1"/>
</dbReference>
<dbReference type="SUPFAM" id="SSF55681">
    <property type="entry name" value="Class II aaRS and biotin synthetases"/>
    <property type="match status" value="1"/>
</dbReference>
<dbReference type="SUPFAM" id="SSF101353">
    <property type="entry name" value="Putative anticodon-binding domain of alanyl-tRNA synthetase (AlaRS)"/>
    <property type="match status" value="1"/>
</dbReference>
<dbReference type="SUPFAM" id="SSF55186">
    <property type="entry name" value="ThrRS/AlaRS common domain"/>
    <property type="match status" value="1"/>
</dbReference>
<dbReference type="SUPFAM" id="SSF50447">
    <property type="entry name" value="Translation proteins"/>
    <property type="match status" value="1"/>
</dbReference>
<dbReference type="PROSITE" id="PS50860">
    <property type="entry name" value="AA_TRNA_LIGASE_II_ALA"/>
    <property type="match status" value="1"/>
</dbReference>
<proteinExistence type="inferred from homology"/>
<reference key="1">
    <citation type="journal article" date="1999" name="Science">
        <title>Genome sequence of the radioresistant bacterium Deinococcus radiodurans R1.</title>
        <authorList>
            <person name="White O."/>
            <person name="Eisen J.A."/>
            <person name="Heidelberg J.F."/>
            <person name="Hickey E.K."/>
            <person name="Peterson J.D."/>
            <person name="Dodson R.J."/>
            <person name="Haft D.H."/>
            <person name="Gwinn M.L."/>
            <person name="Nelson W.C."/>
            <person name="Richardson D.L."/>
            <person name="Moffat K.S."/>
            <person name="Qin H."/>
            <person name="Jiang L."/>
            <person name="Pamphile W."/>
            <person name="Crosby M."/>
            <person name="Shen M."/>
            <person name="Vamathevan J.J."/>
            <person name="Lam P."/>
            <person name="McDonald L.A."/>
            <person name="Utterback T.R."/>
            <person name="Zalewski C."/>
            <person name="Makarova K.S."/>
            <person name="Aravind L."/>
            <person name="Daly M.J."/>
            <person name="Minton K.W."/>
            <person name="Fleischmann R.D."/>
            <person name="Ketchum K.A."/>
            <person name="Nelson K.E."/>
            <person name="Salzberg S.L."/>
            <person name="Smith H.O."/>
            <person name="Venter J.C."/>
            <person name="Fraser C.M."/>
        </authorList>
    </citation>
    <scope>NUCLEOTIDE SEQUENCE [LARGE SCALE GENOMIC DNA]</scope>
    <source>
        <strain>ATCC 13939 / DSM 20539 / JCM 16871 / CCUG 27074 / LMG 4051 / NBRC 15346 / NCIMB 9279 / VKM B-1422 / R1</strain>
    </source>
</reference>
<accession>Q9RS27</accession>
<protein>
    <recommendedName>
        <fullName evidence="1">Alanine--tRNA ligase</fullName>
        <ecNumber evidence="1">6.1.1.7</ecNumber>
    </recommendedName>
    <alternativeName>
        <fullName evidence="1">Alanyl-tRNA synthetase</fullName>
        <shortName evidence="1">AlaRS</shortName>
    </alternativeName>
</protein>
<name>SYA_DEIRA</name>